<sequence length="162" mass="18323">MELKFLGEPCLTTVSEPVSEVDEQLRAFISGMFRVMRGAGGVGLAAPQVGRTVRVFVVDVEHHVRAFINPQITAASEEQSSYEEGCLSIPHIYERVLRPRRVSVQYLDENGKRCAVDADGILARVIQHEYDHLDGILFLDRIDEKRRDDALRRYAALRGTIR</sequence>
<comment type="function">
    <text evidence="1">Removes the formyl group from the N-terminal Met of newly synthesized proteins. Requires at least a dipeptide for an efficient rate of reaction. N-terminal L-methionine is a prerequisite for activity but the enzyme has broad specificity at other positions.</text>
</comment>
<comment type="catalytic activity">
    <reaction evidence="1">
        <text>N-terminal N-formyl-L-methionyl-[peptide] + H2O = N-terminal L-methionyl-[peptide] + formate</text>
        <dbReference type="Rhea" id="RHEA:24420"/>
        <dbReference type="Rhea" id="RHEA-COMP:10639"/>
        <dbReference type="Rhea" id="RHEA-COMP:10640"/>
        <dbReference type="ChEBI" id="CHEBI:15377"/>
        <dbReference type="ChEBI" id="CHEBI:15740"/>
        <dbReference type="ChEBI" id="CHEBI:49298"/>
        <dbReference type="ChEBI" id="CHEBI:64731"/>
        <dbReference type="EC" id="3.5.1.88"/>
    </reaction>
</comment>
<comment type="cofactor">
    <cofactor evidence="1">
        <name>Fe(2+)</name>
        <dbReference type="ChEBI" id="CHEBI:29033"/>
    </cofactor>
    <text evidence="1">Binds 1 Fe(2+) ion.</text>
</comment>
<comment type="similarity">
    <text evidence="1">Belongs to the polypeptide deformylase family.</text>
</comment>
<proteinExistence type="inferred from homology"/>
<accession>B2S3Z6</accession>
<reference key="1">
    <citation type="journal article" date="2008" name="BMC Microbiol.">
        <title>Complete genome sequence of Treponema pallidum ssp. pallidum strain SS14 determined with oligonucleotide arrays.</title>
        <authorList>
            <person name="Matejkova P."/>
            <person name="Strouhal M."/>
            <person name="Smajs D."/>
            <person name="Norris S.J."/>
            <person name="Palzkill T."/>
            <person name="Petrosino J.F."/>
            <person name="Sodergren E."/>
            <person name="Norton J.E."/>
            <person name="Singh J."/>
            <person name="Richmond T.A."/>
            <person name="Molla M.N."/>
            <person name="Albert T.J."/>
            <person name="Weinstock G.M."/>
        </authorList>
    </citation>
    <scope>NUCLEOTIDE SEQUENCE [LARGE SCALE GENOMIC DNA]</scope>
    <source>
        <strain>SS14</strain>
    </source>
</reference>
<dbReference type="EC" id="3.5.1.88" evidence="1"/>
<dbReference type="EMBL" id="CP000805">
    <property type="protein sequence ID" value="ACD71175.1"/>
    <property type="molecule type" value="Genomic_DNA"/>
</dbReference>
<dbReference type="RefSeq" id="WP_010882202.1">
    <property type="nucleotide sequence ID" value="NC_021508.1"/>
</dbReference>
<dbReference type="SMR" id="B2S3Z6"/>
<dbReference type="GeneID" id="93876524"/>
<dbReference type="KEGG" id="tpp:TPASS_0757"/>
<dbReference type="PATRIC" id="fig|455434.6.peg.746"/>
<dbReference type="Proteomes" id="UP000001202">
    <property type="component" value="Chromosome"/>
</dbReference>
<dbReference type="GO" id="GO:0046872">
    <property type="term" value="F:metal ion binding"/>
    <property type="evidence" value="ECO:0007669"/>
    <property type="project" value="UniProtKB-KW"/>
</dbReference>
<dbReference type="GO" id="GO:0042586">
    <property type="term" value="F:peptide deformylase activity"/>
    <property type="evidence" value="ECO:0007669"/>
    <property type="project" value="UniProtKB-UniRule"/>
</dbReference>
<dbReference type="GO" id="GO:0043686">
    <property type="term" value="P:co-translational protein modification"/>
    <property type="evidence" value="ECO:0007669"/>
    <property type="project" value="TreeGrafter"/>
</dbReference>
<dbReference type="GO" id="GO:0006412">
    <property type="term" value="P:translation"/>
    <property type="evidence" value="ECO:0007669"/>
    <property type="project" value="UniProtKB-UniRule"/>
</dbReference>
<dbReference type="CDD" id="cd00487">
    <property type="entry name" value="Pep_deformylase"/>
    <property type="match status" value="1"/>
</dbReference>
<dbReference type="Gene3D" id="3.90.45.10">
    <property type="entry name" value="Peptide deformylase"/>
    <property type="match status" value="1"/>
</dbReference>
<dbReference type="HAMAP" id="MF_00163">
    <property type="entry name" value="Pep_deformylase"/>
    <property type="match status" value="1"/>
</dbReference>
<dbReference type="InterPro" id="IPR023635">
    <property type="entry name" value="Peptide_deformylase"/>
</dbReference>
<dbReference type="InterPro" id="IPR036821">
    <property type="entry name" value="Peptide_deformylase_sf"/>
</dbReference>
<dbReference type="NCBIfam" id="TIGR00079">
    <property type="entry name" value="pept_deformyl"/>
    <property type="match status" value="1"/>
</dbReference>
<dbReference type="NCBIfam" id="NF001159">
    <property type="entry name" value="PRK00150.1-3"/>
    <property type="match status" value="1"/>
</dbReference>
<dbReference type="PANTHER" id="PTHR10458">
    <property type="entry name" value="PEPTIDE DEFORMYLASE"/>
    <property type="match status" value="1"/>
</dbReference>
<dbReference type="PANTHER" id="PTHR10458:SF22">
    <property type="entry name" value="PEPTIDE DEFORMYLASE"/>
    <property type="match status" value="1"/>
</dbReference>
<dbReference type="Pfam" id="PF01327">
    <property type="entry name" value="Pep_deformylase"/>
    <property type="match status" value="1"/>
</dbReference>
<dbReference type="PIRSF" id="PIRSF004749">
    <property type="entry name" value="Pep_def"/>
    <property type="match status" value="1"/>
</dbReference>
<dbReference type="PRINTS" id="PR01576">
    <property type="entry name" value="PDEFORMYLASE"/>
</dbReference>
<dbReference type="SUPFAM" id="SSF56420">
    <property type="entry name" value="Peptide deformylase"/>
    <property type="match status" value="1"/>
</dbReference>
<feature type="chain" id="PRO_1000097357" description="Peptide deformylase">
    <location>
        <begin position="1"/>
        <end position="162"/>
    </location>
</feature>
<feature type="active site" evidence="1">
    <location>
        <position position="129"/>
    </location>
</feature>
<feature type="binding site" evidence="1">
    <location>
        <position position="86"/>
    </location>
    <ligand>
        <name>Fe cation</name>
        <dbReference type="ChEBI" id="CHEBI:24875"/>
    </ligand>
</feature>
<feature type="binding site" evidence="1">
    <location>
        <position position="128"/>
    </location>
    <ligand>
        <name>Fe cation</name>
        <dbReference type="ChEBI" id="CHEBI:24875"/>
    </ligand>
</feature>
<feature type="binding site" evidence="1">
    <location>
        <position position="132"/>
    </location>
    <ligand>
        <name>Fe cation</name>
        <dbReference type="ChEBI" id="CHEBI:24875"/>
    </ligand>
</feature>
<name>DEF_TREPS</name>
<keyword id="KW-0378">Hydrolase</keyword>
<keyword id="KW-0408">Iron</keyword>
<keyword id="KW-0479">Metal-binding</keyword>
<keyword id="KW-0648">Protein biosynthesis</keyword>
<evidence type="ECO:0000255" key="1">
    <source>
        <dbReference type="HAMAP-Rule" id="MF_00163"/>
    </source>
</evidence>
<organism>
    <name type="scientific">Treponema pallidum subsp. pallidum (strain SS14)</name>
    <dbReference type="NCBI Taxonomy" id="455434"/>
    <lineage>
        <taxon>Bacteria</taxon>
        <taxon>Pseudomonadati</taxon>
        <taxon>Spirochaetota</taxon>
        <taxon>Spirochaetia</taxon>
        <taxon>Spirochaetales</taxon>
        <taxon>Treponemataceae</taxon>
        <taxon>Treponema</taxon>
    </lineage>
</organism>
<protein>
    <recommendedName>
        <fullName evidence="1">Peptide deformylase</fullName>
        <shortName evidence="1">PDF</shortName>
        <ecNumber evidence="1">3.5.1.88</ecNumber>
    </recommendedName>
    <alternativeName>
        <fullName evidence="1">Polypeptide deformylase</fullName>
    </alternativeName>
</protein>
<gene>
    <name evidence="1" type="primary">def</name>
    <name type="ordered locus">TPASS_0757</name>
</gene>